<evidence type="ECO:0000255" key="1">
    <source>
        <dbReference type="HAMAP-Rule" id="MF_04085"/>
    </source>
</evidence>
<evidence type="ECO:0000269" key="2">
    <source>
    </source>
</evidence>
<evidence type="ECO:0000269" key="3">
    <source>
    </source>
</evidence>
<evidence type="ECO:0000269" key="4">
    <source>
    </source>
</evidence>
<evidence type="ECO:0000269" key="5">
    <source>
    </source>
</evidence>
<evidence type="ECO:0000269" key="6">
    <source>
    </source>
</evidence>
<evidence type="ECO:0000269" key="7">
    <source>
    </source>
</evidence>
<evidence type="ECO:0007829" key="8">
    <source>
        <dbReference type="PDB" id="3MWP"/>
    </source>
</evidence>
<evidence type="ECO:0007829" key="9">
    <source>
        <dbReference type="PDB" id="3MX5"/>
    </source>
</evidence>
<evidence type="ECO:0007829" key="10">
    <source>
        <dbReference type="PDB" id="3Q7C"/>
    </source>
</evidence>
<evidence type="ECO:0007829" key="11">
    <source>
        <dbReference type="PDB" id="4G9Z"/>
    </source>
</evidence>
<evidence type="ECO:0007829" key="12">
    <source>
        <dbReference type="PDB" id="7V3C"/>
    </source>
</evidence>
<accession>P13699</accession>
<proteinExistence type="evidence at protein level"/>
<reference key="1">
    <citation type="journal article" date="1989" name="Virology">
        <title>Nucleotide sequence of the Lassa virus (Josiah strain) S genome RNA and amino acid sequence comparison of the N and GPC proteins to other arenaviruses.</title>
        <authorList>
            <person name="Auperin D.D."/>
            <person name="McCormick J.B."/>
        </authorList>
    </citation>
    <scope>NUCLEOTIDE SEQUENCE [GENOMIC RNA]</scope>
</reference>
<reference key="2">
    <citation type="journal article" date="2004" name="Virus Res.">
        <title>Characterization of the Lassa virus matrix protein Z: electron microscopic study of virus-like particles and interaction with the nucleoprotein (NP).</title>
        <authorList>
            <person name="Eichler R."/>
            <person name="Strecker T."/>
            <person name="Kolesnikova L."/>
            <person name="ter Meulen J."/>
            <person name="Weissenhorn W."/>
            <person name="Becker S."/>
            <person name="Klenk H.D."/>
            <person name="Garten W."/>
            <person name="Lenz O."/>
        </authorList>
    </citation>
    <scope>INTERACTION WITH PROTEIN Z</scope>
</reference>
<reference key="3">
    <citation type="journal article" date="2012" name="J. Virol.">
        <title>Arenavirus nucleoprotein targets interferon regulatory factor-activating kinase IKKepsilon.</title>
        <authorList>
            <person name="Pythoud C."/>
            <person name="Rodrigo W.W."/>
            <person name="Pasqual G."/>
            <person name="Rothenberger S."/>
            <person name="Martinez-Sobrido L."/>
            <person name="de la Torre J.C."/>
            <person name="Kunz S."/>
        </authorList>
    </citation>
    <scope>INTERACTION WITH HOST IKBKE</scope>
</reference>
<reference key="4">
    <citation type="journal article" date="2010" name="Nature">
        <title>Cap binding and immune evasion revealed by Lassa nucleoprotein structure.</title>
        <authorList>
            <person name="Qi X."/>
            <person name="Lan S."/>
            <person name="Wang W."/>
            <person name="Schelde L.M."/>
            <person name="Dong H."/>
            <person name="Wallat G.D."/>
            <person name="Ly H."/>
            <person name="Liang Y."/>
            <person name="Dong C."/>
        </authorList>
    </citation>
    <scope>X-RAY CRYSTALLOGRAPHY (1.80 ANGSTROMS) IN COMPLEX WITH MANGANESE AND ZINC</scope>
    <scope>FUNCTION</scope>
    <scope>MUTAGENESIS OF ASP-389; GLU-391 AND ASP-466</scope>
</reference>
<reference key="5">
    <citation type="journal article" date="2011" name="Proc. Natl. Acad. Sci. U.S.A.">
        <title>Structure of the Lassa virus nucleoprotein reveals a dsRNA-specific 3' to 5' exonuclease activity essential for immune suppression.</title>
        <authorList>
            <person name="Hastie K.M."/>
            <person name="Kimberlin C.R."/>
            <person name="Zandonatti M.A."/>
            <person name="MacRae I.J."/>
            <person name="Saphire E.O."/>
        </authorList>
    </citation>
    <scope>X-RAY CRYSTALLOGRAPHY (1.50 ANGSTROMS) OF 342-569 IN COMPLEX WITH MANGANESE AND ZINC</scope>
    <scope>FUNCTION</scope>
</reference>
<reference key="6">
    <citation type="journal article" date="2012" name="PLoS ONE">
        <title>Structural basis for the dsRNA specificity of the Lassa virus NP exonuclease.</title>
        <authorList>
            <person name="Hastie K.M."/>
            <person name="King L.B."/>
            <person name="Zandonatti M.A."/>
            <person name="Saphire E.O."/>
        </authorList>
    </citation>
    <scope>X-RAY CRYSTALLOGRAPHY (2.91 ANGSTROMS) OF 342-569 IN COMPLEX WITH ZINC</scope>
    <scope>FUNCTION</scope>
</reference>
<reference key="7">
    <citation type="journal article" date="2013" name="J. Biol. Chem.">
        <title>Structures of arenaviral nucleoproteins with triphosphate dsRNA reveal a unique mechanism of immune suppression.</title>
        <authorList>
            <person name="Jiang X."/>
            <person name="Huang Q."/>
            <person name="Wang W."/>
            <person name="Dong H."/>
            <person name="Ly H."/>
            <person name="Liang Y."/>
            <person name="Dong C."/>
        </authorList>
    </citation>
    <scope>X-RAY CRYSTALLOGRAPHY (1.68 ANGSTROMS) OF 364-569 IN COMPLEX WITH ZINC</scope>
    <scope>FUNCTION</scope>
</reference>
<gene>
    <name evidence="1" type="primary">N</name>
</gene>
<organism>
    <name type="scientific">Lassa virus (strain Mouse/Sierra Leone/Josiah/1976)</name>
    <name type="common">LASV</name>
    <dbReference type="NCBI Taxonomy" id="11622"/>
    <lineage>
        <taxon>Viruses</taxon>
        <taxon>Riboviria</taxon>
        <taxon>Orthornavirae</taxon>
        <taxon>Negarnaviricota</taxon>
        <taxon>Polyploviricotina</taxon>
        <taxon>Ellioviricetes</taxon>
        <taxon>Bunyavirales</taxon>
        <taxon>Arenaviridae</taxon>
        <taxon>Mammarenavirus</taxon>
        <taxon>Mammarenavirus lassaense</taxon>
    </lineage>
</organism>
<name>NCAP_LASSJ</name>
<keyword id="KW-0002">3D-structure</keyword>
<keyword id="KW-0167">Capsid protein</keyword>
<keyword id="KW-1139">Helical capsid protein</keyword>
<keyword id="KW-1035">Host cytoplasm</keyword>
<keyword id="KW-0945">Host-virus interaction</keyword>
<keyword id="KW-0378">Hydrolase</keyword>
<keyword id="KW-1224">Inhibition of host IKBKE by virus</keyword>
<keyword id="KW-1090">Inhibition of host innate immune response by virus</keyword>
<keyword id="KW-1113">Inhibition of host RLR pathway by virus</keyword>
<keyword id="KW-0922">Interferon antiviral system evasion</keyword>
<keyword id="KW-0464">Manganese</keyword>
<keyword id="KW-0479">Metal-binding</keyword>
<keyword id="KW-1185">Reference proteome</keyword>
<keyword id="KW-0687">Ribonucleoprotein</keyword>
<keyword id="KW-0694">RNA-binding</keyword>
<keyword id="KW-0899">Viral immunoevasion</keyword>
<keyword id="KW-0543">Viral nucleoprotein</keyword>
<keyword id="KW-0946">Virion</keyword>
<keyword id="KW-0862">Zinc</keyword>
<comment type="function">
    <text evidence="1 3 4 6 7">Encapsidates the genome, protecting it from nucleases. The encapsidated genomic RNA is termed the nucleocapsid (NC). Serves as template for viral transcription and replication. The increased presence of protein N in host cell does not seem to trigger the switch from transcription to replication as observed in other negative strain RNA viruses. Through the interaction with host IKBKE, strongly inhibits the phosphorylation and nuclear translocation of host IRF3, a protein involved in interferon activation pathway, leading to the inhibition of interferon-beta and IRF3-dependent promoters activation. Also encodes a functional 3'-5' exoribonuclease that degrades preferentially dsRNA substrates and thereby participates in the suppression of interferon induction.</text>
</comment>
<comment type="subunit">
    <text evidence="1 2 5">Homomultimerizes to form the nucleocapsid. Binds to viral genomic RNA. Interacts with glycoprotein G2. Interacts with protein Z; this interaction probably directs the encapsidated genome to budding sites (PubMed:15019244). Interacts with protein L; this interaction does not interfere with Z-L interaction. Interacts with host IKBKE (via Protein kinase domain); the interaction inhibits IKBKE kinase activity (PubMed:22532683).</text>
</comment>
<comment type="interaction">
    <interactant intactId="EBI-15893081">
        <id>P13699</id>
    </interactant>
    <interactant intactId="EBI-15893081">
        <id>P13699</id>
        <label>N</label>
    </interactant>
    <organismsDiffer>false</organismsDiffer>
    <experiments>2</experiments>
</comment>
<comment type="subcellular location">
    <subcellularLocation>
        <location evidence="1">Virion</location>
    </subcellularLocation>
    <subcellularLocation>
        <location evidence="1">Host cytoplasm</location>
    </subcellularLocation>
</comment>
<comment type="domain">
    <text evidence="1 3 4">The N-terminal region is important for the cap-binding activity while the C-terminal region contains the 3'-5' exoribonuclease activity. A CCHE zinc binding site is present in the C-terminal region and may thus contribute to the substrate binding and/or the specificity of the exonuclease activity.</text>
</comment>
<comment type="similarity">
    <text evidence="1">Belongs to the arenaviridae nucleocapsid protein family.</text>
</comment>
<dbReference type="EC" id="3.1.13.-" evidence="1"/>
<dbReference type="EMBL" id="J04324">
    <property type="protein sequence ID" value="AAA46285.1"/>
    <property type="molecule type" value="Genomic_RNA"/>
</dbReference>
<dbReference type="PIR" id="A31294">
    <property type="entry name" value="VHXPLJ"/>
</dbReference>
<dbReference type="RefSeq" id="NP_694869.1">
    <property type="nucleotide sequence ID" value="NC_004296.1"/>
</dbReference>
<dbReference type="PDB" id="3MWP">
    <property type="method" value="X-ray"/>
    <property type="resolution" value="1.80 A"/>
    <property type="chains" value="A/B/C=1-569"/>
</dbReference>
<dbReference type="PDB" id="3MWT">
    <property type="method" value="X-ray"/>
    <property type="resolution" value="1.98 A"/>
    <property type="chains" value="A/B/C=1-569"/>
</dbReference>
<dbReference type="PDB" id="3MX2">
    <property type="method" value="X-ray"/>
    <property type="resolution" value="1.98 A"/>
    <property type="chains" value="A/B/C=1-569"/>
</dbReference>
<dbReference type="PDB" id="3MX5">
    <property type="method" value="X-ray"/>
    <property type="resolution" value="1.90 A"/>
    <property type="chains" value="A/B/C=1-569"/>
</dbReference>
<dbReference type="PDB" id="3Q7B">
    <property type="method" value="X-ray"/>
    <property type="resolution" value="2.00 A"/>
    <property type="chains" value="A=342-569"/>
</dbReference>
<dbReference type="PDB" id="3Q7C">
    <property type="method" value="X-ray"/>
    <property type="resolution" value="1.50 A"/>
    <property type="chains" value="A=342-569"/>
</dbReference>
<dbReference type="PDB" id="4FVU">
    <property type="method" value="X-ray"/>
    <property type="resolution" value="2.91 A"/>
    <property type="chains" value="A=342-569"/>
</dbReference>
<dbReference type="PDB" id="4G9Z">
    <property type="method" value="X-ray"/>
    <property type="resolution" value="2.03 A"/>
    <property type="chains" value="A=364-569"/>
</dbReference>
<dbReference type="PDB" id="4GV3">
    <property type="method" value="X-ray"/>
    <property type="resolution" value="1.68 A"/>
    <property type="chains" value="A=364-569"/>
</dbReference>
<dbReference type="PDB" id="4GV6">
    <property type="method" value="X-ray"/>
    <property type="resolution" value="1.98 A"/>
    <property type="chains" value="A=364-569"/>
</dbReference>
<dbReference type="PDB" id="4GV9">
    <property type="method" value="X-ray"/>
    <property type="resolution" value="2.46 A"/>
    <property type="chains" value="A=364-569"/>
</dbReference>
<dbReference type="PDB" id="7V37">
    <property type="method" value="X-ray"/>
    <property type="resolution" value="2.40 A"/>
    <property type="chains" value="A/B=342-569"/>
</dbReference>
<dbReference type="PDB" id="7V38">
    <property type="method" value="X-ray"/>
    <property type="resolution" value="2.40 A"/>
    <property type="chains" value="A/B=342-569"/>
</dbReference>
<dbReference type="PDB" id="7V39">
    <property type="method" value="X-ray"/>
    <property type="resolution" value="2.20 A"/>
    <property type="chains" value="A/B=342-569"/>
</dbReference>
<dbReference type="PDB" id="7V3A">
    <property type="method" value="X-ray"/>
    <property type="resolution" value="2.10 A"/>
    <property type="chains" value="A/B=342-569"/>
</dbReference>
<dbReference type="PDB" id="7V3B">
    <property type="method" value="X-ray"/>
    <property type="resolution" value="1.80 A"/>
    <property type="chains" value="A/B=342-569"/>
</dbReference>
<dbReference type="PDB" id="7V3C">
    <property type="method" value="X-ray"/>
    <property type="resolution" value="1.90 A"/>
    <property type="chains" value="A/B=342-569"/>
</dbReference>
<dbReference type="PDBsum" id="3MWP"/>
<dbReference type="PDBsum" id="3MWT"/>
<dbReference type="PDBsum" id="3MX2"/>
<dbReference type="PDBsum" id="3MX5"/>
<dbReference type="PDBsum" id="3Q7B"/>
<dbReference type="PDBsum" id="3Q7C"/>
<dbReference type="PDBsum" id="4FVU"/>
<dbReference type="PDBsum" id="4G9Z"/>
<dbReference type="PDBsum" id="4GV3"/>
<dbReference type="PDBsum" id="4GV6"/>
<dbReference type="PDBsum" id="4GV9"/>
<dbReference type="PDBsum" id="7V37"/>
<dbReference type="PDBsum" id="7V38"/>
<dbReference type="PDBsum" id="7V39"/>
<dbReference type="PDBsum" id="7V3A"/>
<dbReference type="PDBsum" id="7V3B"/>
<dbReference type="PDBsum" id="7V3C"/>
<dbReference type="SMR" id="P13699"/>
<dbReference type="DIP" id="DIP-59217N"/>
<dbReference type="KEGG" id="vg:956584"/>
<dbReference type="EvolutionaryTrace" id="P13699"/>
<dbReference type="Proteomes" id="UP000002473">
    <property type="component" value="Genome"/>
</dbReference>
<dbReference type="GO" id="GO:0019029">
    <property type="term" value="C:helical viral capsid"/>
    <property type="evidence" value="ECO:0007669"/>
    <property type="project" value="UniProtKB-UniRule"/>
</dbReference>
<dbReference type="GO" id="GO:0030430">
    <property type="term" value="C:host cell cytoplasm"/>
    <property type="evidence" value="ECO:0007669"/>
    <property type="project" value="UniProtKB-SubCell"/>
</dbReference>
<dbReference type="GO" id="GO:1990904">
    <property type="term" value="C:ribonucleoprotein complex"/>
    <property type="evidence" value="ECO:0007669"/>
    <property type="project" value="UniProtKB-KW"/>
</dbReference>
<dbReference type="GO" id="GO:0019013">
    <property type="term" value="C:viral nucleocapsid"/>
    <property type="evidence" value="ECO:0007669"/>
    <property type="project" value="UniProtKB-UniRule"/>
</dbReference>
<dbReference type="GO" id="GO:0008408">
    <property type="term" value="F:3'-5' exonuclease activity"/>
    <property type="evidence" value="ECO:0000315"/>
    <property type="project" value="CACAO"/>
</dbReference>
<dbReference type="GO" id="GO:0042802">
    <property type="term" value="F:identical protein binding"/>
    <property type="evidence" value="ECO:0000353"/>
    <property type="project" value="IntAct"/>
</dbReference>
<dbReference type="GO" id="GO:0046872">
    <property type="term" value="F:metal ion binding"/>
    <property type="evidence" value="ECO:0007669"/>
    <property type="project" value="UniProtKB-UniRule"/>
</dbReference>
<dbReference type="GO" id="GO:0003723">
    <property type="term" value="F:RNA binding"/>
    <property type="evidence" value="ECO:0007669"/>
    <property type="project" value="UniProtKB-UniRule"/>
</dbReference>
<dbReference type="GO" id="GO:0039689">
    <property type="term" value="P:negative stranded viral RNA replication"/>
    <property type="evidence" value="ECO:0000250"/>
    <property type="project" value="UniProtKB"/>
</dbReference>
<dbReference type="GO" id="GO:0039696">
    <property type="term" value="P:RNA-templated viral transcription"/>
    <property type="evidence" value="ECO:0000250"/>
    <property type="project" value="UniProtKB"/>
</dbReference>
<dbReference type="GO" id="GO:0039724">
    <property type="term" value="P:symbiont-mediated suppression of host cytoplasmic pattern recognition receptor signaling pathway via inhibition of IKBKE activity"/>
    <property type="evidence" value="ECO:0007669"/>
    <property type="project" value="UniProtKB-UniRule"/>
</dbReference>
<dbReference type="GO" id="GO:0039548">
    <property type="term" value="P:symbiont-mediated suppression of host cytoplasmic pattern recognition receptor signaling pathway via inhibition of IRF3 activity"/>
    <property type="evidence" value="ECO:0000315"/>
    <property type="project" value="CACAO"/>
</dbReference>
<dbReference type="FunFam" id="1.10.150.550:FF:000001">
    <property type="entry name" value="Nucleoprotein"/>
    <property type="match status" value="1"/>
</dbReference>
<dbReference type="FunFam" id="1.10.150.550:FF:000002">
    <property type="entry name" value="Nucleoprotein"/>
    <property type="match status" value="1"/>
</dbReference>
<dbReference type="FunFam" id="3.30.420.410:FF:000001">
    <property type="entry name" value="Nucleoprotein"/>
    <property type="match status" value="1"/>
</dbReference>
<dbReference type="Gene3D" id="6.10.250.1200">
    <property type="match status" value="1"/>
</dbReference>
<dbReference type="Gene3D" id="3.30.420.410">
    <property type="entry name" value="Arenaviral nucleoprotein, C-terminal domain"/>
    <property type="match status" value="1"/>
</dbReference>
<dbReference type="Gene3D" id="1.10.150.550">
    <property type="entry name" value="Arenavirus nucleocapsid protein, head domain"/>
    <property type="match status" value="2"/>
</dbReference>
<dbReference type="HAMAP" id="MF_04085">
    <property type="entry name" value="ARENA_NCAP"/>
    <property type="match status" value="1"/>
</dbReference>
<dbReference type="InterPro" id="IPR000229">
    <property type="entry name" value="Nucleocapsid_arenaviridae"/>
</dbReference>
<dbReference type="InterPro" id="IPR035084">
    <property type="entry name" value="Nucleocapsid_C_arenaviridae"/>
</dbReference>
<dbReference type="InterPro" id="IPR038115">
    <property type="entry name" value="Nucleocapsid_C_sf"/>
</dbReference>
<dbReference type="InterPro" id="IPR035083">
    <property type="entry name" value="Nucleocapsid_N_arenaviridae"/>
</dbReference>
<dbReference type="InterPro" id="IPR001680">
    <property type="entry name" value="WD40_rpt"/>
</dbReference>
<dbReference type="Pfam" id="PF17290">
    <property type="entry name" value="Arena_ncap_C"/>
    <property type="match status" value="1"/>
</dbReference>
<dbReference type="Pfam" id="PF00843">
    <property type="entry name" value="Arena_nucleocap"/>
    <property type="match status" value="1"/>
</dbReference>
<dbReference type="PIRSF" id="PIRSF004029">
    <property type="entry name" value="N_ArenaV"/>
    <property type="match status" value="1"/>
</dbReference>
<organismHost>
    <name type="scientific">Homo sapiens</name>
    <name type="common">Human</name>
    <dbReference type="NCBI Taxonomy" id="9606"/>
</organismHost>
<organismHost>
    <name type="scientific">Mastomys natalensis</name>
    <name type="common">African soft-furred rat</name>
    <name type="synonym">Praomys natalensis</name>
    <dbReference type="NCBI Taxonomy" id="10112"/>
</organismHost>
<feature type="chain" id="PRO_0000079192" description="Nucleoprotein">
    <location>
        <begin position="1"/>
        <end position="569"/>
    </location>
</feature>
<feature type="region of interest" description="Binding site for the cap structure m7GTP" evidence="1 3">
    <location>
        <begin position="54"/>
        <end position="241"/>
    </location>
</feature>
<feature type="binding site" evidence="1 3 4">
    <location>
        <position position="389"/>
    </location>
    <ligand>
        <name>Mn(2+)</name>
        <dbReference type="ChEBI" id="CHEBI:29035"/>
    </ligand>
</feature>
<feature type="binding site" evidence="1 3 4">
    <location>
        <position position="391"/>
    </location>
    <ligand>
        <name>Mn(2+)</name>
        <dbReference type="ChEBI" id="CHEBI:29035"/>
    </ligand>
</feature>
<feature type="binding site" evidence="1 3 4 6 7">
    <location>
        <position position="399"/>
    </location>
    <ligand>
        <name>Zn(2+)</name>
        <dbReference type="ChEBI" id="CHEBI:29105"/>
    </ligand>
</feature>
<feature type="binding site" evidence="1 3 4 6 7">
    <location>
        <position position="506"/>
    </location>
    <ligand>
        <name>Zn(2+)</name>
        <dbReference type="ChEBI" id="CHEBI:29105"/>
    </ligand>
</feature>
<feature type="binding site" evidence="1 3 4 6 7">
    <location>
        <position position="509"/>
    </location>
    <ligand>
        <name>Zn(2+)</name>
        <dbReference type="ChEBI" id="CHEBI:29105"/>
    </ligand>
</feature>
<feature type="binding site" evidence="1 3 4 6 7">
    <location>
        <position position="529"/>
    </location>
    <ligand>
        <name>Zn(2+)</name>
        <dbReference type="ChEBI" id="CHEBI:29105"/>
    </ligand>
</feature>
<feature type="binding site" evidence="1 3 4">
    <location>
        <position position="533"/>
    </location>
    <ligand>
        <name>Mn(2+)</name>
        <dbReference type="ChEBI" id="CHEBI:29035"/>
    </ligand>
</feature>
<feature type="site" description="Important for exonuclease activity" evidence="1 3">
    <location>
        <position position="466"/>
    </location>
</feature>
<feature type="mutagenesis site" description="Loss of RNase activity." evidence="4">
    <original>D</original>
    <variation>A</variation>
    <location>
        <position position="389"/>
    </location>
</feature>
<feature type="mutagenesis site" description="Loss of RNase activity." evidence="4">
    <original>E</original>
    <variation>A</variation>
    <location>
        <position position="391"/>
    </location>
</feature>
<feature type="mutagenesis site" description="Loss of RNase activity." evidence="4">
    <original>D</original>
    <variation>A</variation>
    <location>
        <position position="466"/>
    </location>
</feature>
<feature type="helix" evidence="8">
    <location>
        <begin position="8"/>
        <end position="19"/>
    </location>
</feature>
<feature type="helix" evidence="8">
    <location>
        <begin position="21"/>
        <end position="23"/>
    </location>
</feature>
<feature type="helix" evidence="8">
    <location>
        <begin position="28"/>
        <end position="41"/>
    </location>
</feature>
<feature type="helix" evidence="8">
    <location>
        <begin position="44"/>
        <end position="55"/>
    </location>
</feature>
<feature type="strand" evidence="8">
    <location>
        <begin position="57"/>
        <end position="60"/>
    </location>
</feature>
<feature type="helix" evidence="8">
    <location>
        <begin position="61"/>
        <end position="77"/>
    </location>
</feature>
<feature type="strand" evidence="8">
    <location>
        <begin position="87"/>
        <end position="89"/>
    </location>
</feature>
<feature type="strand" evidence="8">
    <location>
        <begin position="91"/>
        <end position="94"/>
    </location>
</feature>
<feature type="helix" evidence="8">
    <location>
        <begin position="96"/>
        <end position="117"/>
    </location>
</feature>
<feature type="helix" evidence="8">
    <location>
        <begin position="119"/>
        <end position="122"/>
    </location>
</feature>
<feature type="helix" evidence="8">
    <location>
        <begin position="131"/>
        <end position="143"/>
    </location>
</feature>
<feature type="strand" evidence="8">
    <location>
        <begin position="163"/>
        <end position="165"/>
    </location>
</feature>
<feature type="helix" evidence="8">
    <location>
        <begin position="169"/>
        <end position="172"/>
    </location>
</feature>
<feature type="helix" evidence="8">
    <location>
        <begin position="180"/>
        <end position="191"/>
    </location>
</feature>
<feature type="helix" evidence="8">
    <location>
        <begin position="195"/>
        <end position="209"/>
    </location>
</feature>
<feature type="helix" evidence="8">
    <location>
        <begin position="216"/>
        <end position="225"/>
    </location>
</feature>
<feature type="helix" evidence="8">
    <location>
        <begin position="227"/>
        <end position="231"/>
    </location>
</feature>
<feature type="strand" evidence="8">
    <location>
        <begin position="232"/>
        <end position="235"/>
    </location>
</feature>
<feature type="strand" evidence="8">
    <location>
        <begin position="238"/>
        <end position="240"/>
    </location>
</feature>
<feature type="helix" evidence="8">
    <location>
        <begin position="248"/>
        <end position="257"/>
    </location>
</feature>
<feature type="strand" evidence="9">
    <location>
        <begin position="258"/>
        <end position="262"/>
    </location>
</feature>
<feature type="helix" evidence="8">
    <location>
        <begin position="265"/>
        <end position="267"/>
    </location>
</feature>
<feature type="turn" evidence="8">
    <location>
        <begin position="272"/>
        <end position="274"/>
    </location>
</feature>
<feature type="helix" evidence="8">
    <location>
        <begin position="275"/>
        <end position="289"/>
    </location>
</feature>
<feature type="helix" evidence="8">
    <location>
        <begin position="302"/>
        <end position="312"/>
    </location>
</feature>
<feature type="strand" evidence="8">
    <location>
        <begin position="314"/>
        <end position="316"/>
    </location>
</feature>
<feature type="turn" evidence="8">
    <location>
        <begin position="318"/>
        <end position="320"/>
    </location>
</feature>
<feature type="helix" evidence="8">
    <location>
        <begin position="330"/>
        <end position="333"/>
    </location>
</feature>
<feature type="strand" evidence="8">
    <location>
        <begin position="334"/>
        <end position="336"/>
    </location>
</feature>
<feature type="strand" evidence="10">
    <location>
        <begin position="363"/>
        <end position="365"/>
    </location>
</feature>
<feature type="helix" evidence="10">
    <location>
        <begin position="367"/>
        <end position="377"/>
    </location>
</feature>
<feature type="strand" evidence="10">
    <location>
        <begin position="387"/>
        <end position="392"/>
    </location>
</feature>
<feature type="strand" evidence="10">
    <location>
        <begin position="398"/>
        <end position="404"/>
    </location>
</feature>
<feature type="turn" evidence="10">
    <location>
        <begin position="405"/>
        <end position="408"/>
    </location>
</feature>
<feature type="strand" evidence="10">
    <location>
        <begin position="409"/>
        <end position="414"/>
    </location>
</feature>
<feature type="helix" evidence="10">
    <location>
        <begin position="420"/>
        <end position="429"/>
    </location>
</feature>
<feature type="helix" evidence="10">
    <location>
        <begin position="435"/>
        <end position="438"/>
    </location>
</feature>
<feature type="strand" evidence="11">
    <location>
        <begin position="439"/>
        <end position="441"/>
    </location>
</feature>
<feature type="helix" evidence="10">
    <location>
        <begin position="445"/>
        <end position="452"/>
    </location>
</feature>
<feature type="strand" evidence="10">
    <location>
        <begin position="458"/>
        <end position="463"/>
    </location>
</feature>
<feature type="helix" evidence="10">
    <location>
        <begin position="464"/>
        <end position="473"/>
    </location>
</feature>
<feature type="strand" evidence="10">
    <location>
        <begin position="479"/>
        <end position="483"/>
    </location>
</feature>
<feature type="helix" evidence="10">
    <location>
        <begin position="488"/>
        <end position="491"/>
    </location>
</feature>
<feature type="turn" evidence="10">
    <location>
        <begin position="492"/>
        <end position="494"/>
    </location>
</feature>
<feature type="helix" evidence="10">
    <location>
        <begin position="495"/>
        <end position="502"/>
    </location>
</feature>
<feature type="helix" evidence="10">
    <location>
        <begin position="503"/>
        <end position="505"/>
    </location>
</feature>
<feature type="strand" evidence="8">
    <location>
        <begin position="513"/>
        <end position="515"/>
    </location>
</feature>
<feature type="strand" evidence="10">
    <location>
        <begin position="518"/>
        <end position="521"/>
    </location>
</feature>
<feature type="strand" evidence="8">
    <location>
        <begin position="523"/>
        <end position="525"/>
    </location>
</feature>
<feature type="helix" evidence="10">
    <location>
        <begin position="530"/>
        <end position="542"/>
    </location>
</feature>
<feature type="strand" evidence="10">
    <location>
        <begin position="551"/>
        <end position="554"/>
    </location>
</feature>
<feature type="helix" evidence="10">
    <location>
        <begin position="556"/>
        <end position="559"/>
    </location>
</feature>
<feature type="strand" evidence="12">
    <location>
        <begin position="560"/>
        <end position="562"/>
    </location>
</feature>
<sequence>MSASKEIKSFLWTQSLRRELSGYCSNIKLQVVKDAQALLHGLDFSEVSNVQRLMRKERRDDNDLKRLRDLNQAVNNLVELKSTQQKSILRVGTLTSDDLLILAADLEKLKSKVIRTERPLSAGVYMGNLSSQQLDQRRALLNMIGMSGGNQGARAGRDGVVRVWDVKNAELLNNQFGTMPSLTLACLTKQGQVDLNDAVQALTDLGLIYTAKYPNTSDLDRLTQSHPILNMIDTKKSSLNISGYNFSLGAAVKAGACMLDGGNMLETIKVSPQTMDGILKSILKVKKALGMFISDTPGERNPYENILYKICLSGDGWPYIASRTSITGRAWENTVVDLESDGKPQKADSNNSSKSLQSAGFTAGLTYSQLMTLKDAMLQLDPNAKTWMDIEGRPEDPVEIALYQPSSGCYIHFFREPTDLKQFKQDAKYSHGIDVTDLFATQPGLTSAVIDALPRNMVITCQGSDDIRKLLESQGRKDIKLIDIALSKTDSRKYENAVWDQYKDLCHMHTGVVVEKKKRGGKEEITPHCALMDCIMFDAAVSGGLNTSVLRAVLPRDMVFRTSTPRVVL</sequence>
<protein>
    <recommendedName>
        <fullName evidence="1">Nucleoprotein</fullName>
        <ecNumber evidence="1">3.1.13.-</ecNumber>
    </recommendedName>
    <alternativeName>
        <fullName evidence="1">Nucleocapsid protein</fullName>
    </alternativeName>
    <alternativeName>
        <fullName evidence="1">Protein N</fullName>
    </alternativeName>
</protein>